<sequence>MSDDVALPLQFTDAAANKVKSLIADEDNPNLKLRVYITGGGCSGFQYGFTFDDQVNEGDMTIEKQGVGLVVDPMSLQYLVGGSVDYTEGLEGSRFIVTNPNAKSTCGCGSSFSI</sequence>
<reference key="1">
    <citation type="journal article" date="2008" name="Genome Res.">
        <title>Comparative genome analysis of Salmonella enteritidis PT4 and Salmonella gallinarum 287/91 provides insights into evolutionary and host adaptation pathways.</title>
        <authorList>
            <person name="Thomson N.R."/>
            <person name="Clayton D.J."/>
            <person name="Windhorst D."/>
            <person name="Vernikos G."/>
            <person name="Davidson S."/>
            <person name="Churcher C."/>
            <person name="Quail M.A."/>
            <person name="Stevens M."/>
            <person name="Jones M.A."/>
            <person name="Watson M."/>
            <person name="Barron A."/>
            <person name="Layton A."/>
            <person name="Pickard D."/>
            <person name="Kingsley R.A."/>
            <person name="Bignell A."/>
            <person name="Clark L."/>
            <person name="Harris B."/>
            <person name="Ormond D."/>
            <person name="Abdellah Z."/>
            <person name="Brooks K."/>
            <person name="Cherevach I."/>
            <person name="Chillingworth T."/>
            <person name="Woodward J."/>
            <person name="Norberczak H."/>
            <person name="Lord A."/>
            <person name="Arrowsmith C."/>
            <person name="Jagels K."/>
            <person name="Moule S."/>
            <person name="Mungall K."/>
            <person name="Saunders M."/>
            <person name="Whitehead S."/>
            <person name="Chabalgoity J.A."/>
            <person name="Maskell D."/>
            <person name="Humphreys T."/>
            <person name="Roberts M."/>
            <person name="Barrow P.A."/>
            <person name="Dougan G."/>
            <person name="Parkhill J."/>
        </authorList>
    </citation>
    <scope>NUCLEOTIDE SEQUENCE [LARGE SCALE GENOMIC DNA]</scope>
    <source>
        <strain>P125109</strain>
    </source>
</reference>
<comment type="function">
    <text evidence="1">Required for insertion of 4Fe-4S clusters for at least IspG.</text>
</comment>
<comment type="cofactor">
    <cofactor evidence="1">
        <name>iron-sulfur cluster</name>
        <dbReference type="ChEBI" id="CHEBI:30408"/>
    </cofactor>
    <text evidence="1">Binds 1 iron-sulfur cluster per subunit.</text>
</comment>
<comment type="subunit">
    <text evidence="1">Homodimer.</text>
</comment>
<comment type="similarity">
    <text evidence="1">Belongs to the HesB/IscA family.</text>
</comment>
<keyword id="KW-0408">Iron</keyword>
<keyword id="KW-0411">Iron-sulfur</keyword>
<keyword id="KW-0479">Metal-binding</keyword>
<dbReference type="EMBL" id="AM933172">
    <property type="protein sequence ID" value="CAR31797.1"/>
    <property type="molecule type" value="Genomic_DNA"/>
</dbReference>
<dbReference type="RefSeq" id="WP_001278668.1">
    <property type="nucleotide sequence ID" value="NC_011294.1"/>
</dbReference>
<dbReference type="SMR" id="B5R3G8"/>
<dbReference type="GeneID" id="66754727"/>
<dbReference type="KEGG" id="set:SEN0209"/>
<dbReference type="HOGENOM" id="CLU_069054_5_3_6"/>
<dbReference type="Proteomes" id="UP000000613">
    <property type="component" value="Chromosome"/>
</dbReference>
<dbReference type="GO" id="GO:0005829">
    <property type="term" value="C:cytosol"/>
    <property type="evidence" value="ECO:0007669"/>
    <property type="project" value="TreeGrafter"/>
</dbReference>
<dbReference type="GO" id="GO:0051537">
    <property type="term" value="F:2 iron, 2 sulfur cluster binding"/>
    <property type="evidence" value="ECO:0007669"/>
    <property type="project" value="UniProtKB-ARBA"/>
</dbReference>
<dbReference type="GO" id="GO:0051539">
    <property type="term" value="F:4 iron, 4 sulfur cluster binding"/>
    <property type="evidence" value="ECO:0007669"/>
    <property type="project" value="TreeGrafter"/>
</dbReference>
<dbReference type="GO" id="GO:0005506">
    <property type="term" value="F:iron ion binding"/>
    <property type="evidence" value="ECO:0007669"/>
    <property type="project" value="UniProtKB-UniRule"/>
</dbReference>
<dbReference type="GO" id="GO:0016226">
    <property type="term" value="P:iron-sulfur cluster assembly"/>
    <property type="evidence" value="ECO:0007669"/>
    <property type="project" value="UniProtKB-UniRule"/>
</dbReference>
<dbReference type="FunFam" id="2.60.300.12:FF:000002">
    <property type="entry name" value="Iron-sulfur cluster insertion protein ErpA"/>
    <property type="match status" value="1"/>
</dbReference>
<dbReference type="Gene3D" id="2.60.300.12">
    <property type="entry name" value="HesB-like domain"/>
    <property type="match status" value="1"/>
</dbReference>
<dbReference type="HAMAP" id="MF_01380">
    <property type="entry name" value="Fe_S_insert_ErpA"/>
    <property type="match status" value="1"/>
</dbReference>
<dbReference type="InterPro" id="IPR000361">
    <property type="entry name" value="FeS_biogenesis"/>
</dbReference>
<dbReference type="InterPro" id="IPR016092">
    <property type="entry name" value="FeS_cluster_insertion"/>
</dbReference>
<dbReference type="InterPro" id="IPR017870">
    <property type="entry name" value="FeS_cluster_insertion_CS"/>
</dbReference>
<dbReference type="InterPro" id="IPR023063">
    <property type="entry name" value="FeS_cluster_insertion_RrpA"/>
</dbReference>
<dbReference type="InterPro" id="IPR035903">
    <property type="entry name" value="HesB-like_dom_sf"/>
</dbReference>
<dbReference type="NCBIfam" id="TIGR00049">
    <property type="entry name" value="iron-sulfur cluster assembly accessory protein"/>
    <property type="match status" value="1"/>
</dbReference>
<dbReference type="NCBIfam" id="NF010147">
    <property type="entry name" value="PRK13623.1"/>
    <property type="match status" value="1"/>
</dbReference>
<dbReference type="PANTHER" id="PTHR43011">
    <property type="entry name" value="IRON-SULFUR CLUSTER ASSEMBLY 2 HOMOLOG, MITOCHONDRIAL"/>
    <property type="match status" value="1"/>
</dbReference>
<dbReference type="PANTHER" id="PTHR43011:SF1">
    <property type="entry name" value="IRON-SULFUR CLUSTER ASSEMBLY 2 HOMOLOG, MITOCHONDRIAL"/>
    <property type="match status" value="1"/>
</dbReference>
<dbReference type="Pfam" id="PF01521">
    <property type="entry name" value="Fe-S_biosyn"/>
    <property type="match status" value="1"/>
</dbReference>
<dbReference type="SUPFAM" id="SSF89360">
    <property type="entry name" value="HesB-like domain"/>
    <property type="match status" value="1"/>
</dbReference>
<dbReference type="PROSITE" id="PS01152">
    <property type="entry name" value="HESB"/>
    <property type="match status" value="1"/>
</dbReference>
<accession>B5R3G8</accession>
<feature type="chain" id="PRO_1000144930" description="Iron-sulfur cluster insertion protein ErpA">
    <location>
        <begin position="1"/>
        <end position="114"/>
    </location>
</feature>
<feature type="binding site" evidence="1">
    <location>
        <position position="42"/>
    </location>
    <ligand>
        <name>iron-sulfur cluster</name>
        <dbReference type="ChEBI" id="CHEBI:30408"/>
    </ligand>
</feature>
<feature type="binding site" evidence="1">
    <location>
        <position position="106"/>
    </location>
    <ligand>
        <name>iron-sulfur cluster</name>
        <dbReference type="ChEBI" id="CHEBI:30408"/>
    </ligand>
</feature>
<feature type="binding site" evidence="1">
    <location>
        <position position="108"/>
    </location>
    <ligand>
        <name>iron-sulfur cluster</name>
        <dbReference type="ChEBI" id="CHEBI:30408"/>
    </ligand>
</feature>
<evidence type="ECO:0000255" key="1">
    <source>
        <dbReference type="HAMAP-Rule" id="MF_01380"/>
    </source>
</evidence>
<name>ERPA_SALEP</name>
<proteinExistence type="inferred from homology"/>
<protein>
    <recommendedName>
        <fullName evidence="1">Iron-sulfur cluster insertion protein ErpA</fullName>
    </recommendedName>
</protein>
<gene>
    <name evidence="1" type="primary">erpA</name>
    <name type="ordered locus">SEN0209</name>
</gene>
<organism>
    <name type="scientific">Salmonella enteritidis PT4 (strain P125109)</name>
    <dbReference type="NCBI Taxonomy" id="550537"/>
    <lineage>
        <taxon>Bacteria</taxon>
        <taxon>Pseudomonadati</taxon>
        <taxon>Pseudomonadota</taxon>
        <taxon>Gammaproteobacteria</taxon>
        <taxon>Enterobacterales</taxon>
        <taxon>Enterobacteriaceae</taxon>
        <taxon>Salmonella</taxon>
    </lineage>
</organism>